<evidence type="ECO:0000250" key="1"/>
<evidence type="ECO:0000250" key="2">
    <source>
        <dbReference type="UniProtKB" id="P19999"/>
    </source>
</evidence>
<evidence type="ECO:0000255" key="3"/>
<evidence type="ECO:0000255" key="4">
    <source>
        <dbReference type="PROSITE-ProRule" id="PRU00040"/>
    </source>
</evidence>
<evidence type="ECO:0000256" key="5">
    <source>
        <dbReference type="SAM" id="MobiDB-lite"/>
    </source>
</evidence>
<evidence type="ECO:0000269" key="6">
    <source>
    </source>
</evidence>
<evidence type="ECO:0000269" key="7">
    <source>
    </source>
</evidence>
<evidence type="ECO:0000269" key="8">
    <source>
    </source>
</evidence>
<evidence type="ECO:0000303" key="9">
    <source>
    </source>
</evidence>
<evidence type="ECO:0000303" key="10">
    <source>
    </source>
</evidence>
<evidence type="ECO:0000305" key="11"/>
<proteinExistence type="evidence at protein level"/>
<reference key="1">
    <citation type="journal article" date="1991" name="J. Immunol.">
        <title>Molecular characterization of the mouse mannose-binding proteins. The mannose-binding protein A but not C is an acute phase reactant.</title>
        <authorList>
            <person name="Sastry K."/>
            <person name="Zahedi K."/>
            <person name="Lelias J.M."/>
            <person name="Whitehead A.S."/>
            <person name="Ezekowitz R.A."/>
        </authorList>
    </citation>
    <scope>NUCLEOTIDE SEQUENCE [MRNA] (ISOFORM 1)</scope>
    <scope>TISSUE SPECIFICITY</scope>
    <source>
        <strain>CBA/J</strain>
        <tissue>Liver</tissue>
    </source>
</reference>
<reference key="2">
    <citation type="journal article" date="1992" name="Biochemistry">
        <title>cDNAs and deduced amino acid sequences of subunits in the binding component of mouse bactericidal factor, Ra-reactive factor: similarity to mannose-binding proteins.</title>
        <authorList>
            <person name="Kuge S."/>
            <person name="Ihara S."/>
            <person name="Watanabe E."/>
            <person name="Watanabe M."/>
            <person name="Takishima K."/>
            <person name="Suga T."/>
            <person name="Mamiya G."/>
            <person name="Kawakami M."/>
        </authorList>
    </citation>
    <scope>NUCLEOTIDE SEQUENCE [MRNA] (ISOFORM 1)</scope>
    <scope>PROTEIN SEQUENCE OF 19-35</scope>
    <scope>TISSUE SPECIFICITY</scope>
    <scope>SUBCELLULAR LOCATION</scope>
    <source>
        <strain>BALB/cJ</strain>
        <tissue>Liver</tissue>
    </source>
</reference>
<reference key="3">
    <citation type="journal article" date="1995" name="Mamm. Genome">
        <title>Characterization of murine mannose-binding protein genes Mbl1 and Mbl2 reveals features common to other collectin genes.</title>
        <authorList>
            <person name="Sastry R."/>
            <person name="Wang J.S."/>
            <person name="Brown D.C."/>
            <person name="Ezekowitz R.A."/>
            <person name="Tauber A.I."/>
            <person name="Sastry K.N."/>
        </authorList>
    </citation>
    <scope>NUCLEOTIDE SEQUENCE [GENOMIC DNA]</scope>
    <source>
        <strain>BALB/cJ</strain>
    </source>
</reference>
<reference key="4">
    <citation type="journal article" date="2004" name="Genome Res.">
        <title>The status, quality, and expansion of the NIH full-length cDNA project: the Mammalian Gene Collection (MGC).</title>
        <authorList>
            <consortium name="The MGC Project Team"/>
        </authorList>
    </citation>
    <scope>NUCLEOTIDE SEQUENCE [LARGE SCALE MRNA] (ISOFORMS 1 AND 2)</scope>
    <source>
        <strain>FVB/N</strain>
        <tissue>Liver</tissue>
        <tissue>Salivary gland</tissue>
    </source>
</reference>
<reference key="5">
    <citation type="journal article" date="2010" name="Cell">
        <title>A tissue-specific atlas of mouse protein phosphorylation and expression.</title>
        <authorList>
            <person name="Huttlin E.L."/>
            <person name="Jedrychowski M.P."/>
            <person name="Elias J.E."/>
            <person name="Goswami T."/>
            <person name="Rad R."/>
            <person name="Beausoleil S.A."/>
            <person name="Villen J."/>
            <person name="Haas W."/>
            <person name="Sowa M.E."/>
            <person name="Gygi S.P."/>
        </authorList>
    </citation>
    <scope>IDENTIFICATION BY MASS SPECTROMETRY [LARGE SCALE ANALYSIS]</scope>
    <source>
        <tissue>Liver</tissue>
    </source>
</reference>
<reference key="6">
    <citation type="journal article" date="2014" name="PLoS ONE">
        <title>Lysyl hydroxylase 3 modifies lysine residues to facilitate oligomerization of mannan-binding lectin.</title>
        <authorList>
            <person name="Risteli M."/>
            <person name="Ruotsalainen H."/>
            <person name="Bergmann U."/>
            <person name="Venkatraman Girija U."/>
            <person name="Wallis R."/>
            <person name="Myllylae R."/>
        </authorList>
    </citation>
    <scope>SUBCELLULAR LOCATION</scope>
    <scope>TISSUE SPECIFICITY</scope>
    <scope>SUBUNIT</scope>
</reference>
<comment type="function">
    <text evidence="1 2">Calcium-dependent lectin. Plays a role in the innate immune response by binding mannose, fucose and N-acetylglucosamine moieties on different microorganisms and mediating activation of the lectin complement pathway (By similarity). Binds to late apoptotic cells, as well as to apoptotic blebs and to necrotic cells, but not to early apoptotic cells, facilitating their uptake by macrophages (By similarity).</text>
</comment>
<comment type="subunit">
    <text evidence="1 2 8">Homotrimer (By similarity). Forms higher oligomeric complexes formed by the association of two, three or more homotrimers (PubMed:25419660). Oligomerization occurs in the endoplasmic reticulum (By similarity). Interacts with MASP1 and MASP2 (By similarity).</text>
</comment>
<comment type="subcellular location">
    <subcellularLocation>
        <location evidence="6 8">Secreted</location>
    </subcellularLocation>
</comment>
<comment type="alternative products">
    <event type="alternative splicing"/>
    <isoform>
        <id>P39039-1</id>
        <name>1</name>
        <sequence type="displayed"/>
    </isoform>
    <isoform>
        <id>P39039-2</id>
        <name>2</name>
        <sequence type="described" ref="VSP_038477"/>
    </isoform>
</comment>
<comment type="tissue specificity">
    <text evidence="6 7 8">Detected in liver and blood serum (at protein level) (PubMed:1637828, PubMed:25419660). Detected in liver (PubMed:1712818).</text>
</comment>
<comment type="domain">
    <text evidence="2">The helical collagen-like domains from three protein chains assemble into a coiled coil and mediate trimerization.</text>
</comment>
<comment type="PTM">
    <text evidence="2">Hydroxylated on lysine and proline residues within the collagen-like domain.</text>
</comment>
<comment type="PTM">
    <text evidence="2">O-glycosylated. O-linked glycans on hydroxylysine residues consist of Glc-Gal disaccharides bound to the oxygen atom of post-translationally added hydroxyl groups.</text>
</comment>
<comment type="miscellaneous">
    <molecule>Isoform 2</molecule>
    <text evidence="11">May be due to competing donor splice site.</text>
</comment>
<comment type="online information" name="Functional Glycomics Gateway - Glycan Binding">
    <link uri="http://www.functionalglycomics.org/glycomics/GBPServlet?&amp;operationType=view&amp;cbpId=cbp_mou_Ctlect_168"/>
    <text>Mannose-binding protein A</text>
</comment>
<organism>
    <name type="scientific">Mus musculus</name>
    <name type="common">Mouse</name>
    <dbReference type="NCBI Taxonomy" id="10090"/>
    <lineage>
        <taxon>Eukaryota</taxon>
        <taxon>Metazoa</taxon>
        <taxon>Chordata</taxon>
        <taxon>Craniata</taxon>
        <taxon>Vertebrata</taxon>
        <taxon>Euteleostomi</taxon>
        <taxon>Mammalia</taxon>
        <taxon>Eutheria</taxon>
        <taxon>Euarchontoglires</taxon>
        <taxon>Glires</taxon>
        <taxon>Rodentia</taxon>
        <taxon>Myomorpha</taxon>
        <taxon>Muroidea</taxon>
        <taxon>Muridae</taxon>
        <taxon>Murinae</taxon>
        <taxon>Mus</taxon>
        <taxon>Mus</taxon>
    </lineage>
</organism>
<gene>
    <name type="primary">Mbl1</name>
</gene>
<sequence length="239" mass="25396">MLLLPLLPVLLCVVSVSSSGSQTCEDTLKTCSVIACGRDGRDGPKGEKGEPGQGLRGLQGPPGKLGPPGSVGSPGSPGPKGQKGDHGDNRAIEEKLANMEAEIRILKSKLQLTNKLHAFSMGKKSGKKLFVTNHEKMPFSKVKSLCTELQGTVAIPRNAEENKAIQEVATGIAFLGITDEATEGQFMYVTGGRLTYSNWKKDEPNNHGSGEDCVIILDNGLWNDISCQASFKAVCEFPA</sequence>
<name>MBL1_MOUSE</name>
<accession>P39039</accession>
<accession>Q0P6H1</accession>
<protein>
    <recommendedName>
        <fullName>Mannose-binding protein A</fullName>
        <shortName evidence="10">MBP-A</shortName>
    </recommendedName>
    <alternativeName>
        <fullName>Mannan-binding protein</fullName>
    </alternativeName>
    <alternativeName>
        <fullName>Ra-reactive factor polysaccharide-binding component p28B</fullName>
        <shortName>RaRF p28B</shortName>
    </alternativeName>
</protein>
<feature type="signal peptide" evidence="6">
    <location>
        <begin position="1"/>
        <end position="18"/>
    </location>
</feature>
<feature type="chain" id="PRO_0000017413" description="Mannose-binding protein A">
    <location>
        <begin position="19"/>
        <end position="239"/>
    </location>
</feature>
<feature type="domain" description="Collagen-like">
    <location>
        <begin position="37"/>
        <end position="89"/>
    </location>
</feature>
<feature type="domain" description="C-type lectin" evidence="4">
    <location>
        <begin position="144"/>
        <end position="239"/>
    </location>
</feature>
<feature type="region of interest" description="Disordered" evidence="5">
    <location>
        <begin position="35"/>
        <end position="88"/>
    </location>
</feature>
<feature type="region of interest" description="Calcium-dependent carbohydrate binding" evidence="2">
    <location>
        <begin position="203"/>
        <end position="211"/>
    </location>
</feature>
<feature type="compositionally biased region" description="Basic and acidic residues" evidence="5">
    <location>
        <begin position="38"/>
        <end position="50"/>
    </location>
</feature>
<feature type="compositionally biased region" description="Low complexity" evidence="5">
    <location>
        <begin position="58"/>
        <end position="74"/>
    </location>
</feature>
<feature type="binding site" evidence="2">
    <location>
        <position position="179"/>
    </location>
    <ligand>
        <name>Ca(2+)</name>
        <dbReference type="ChEBI" id="CHEBI:29108"/>
        <label>1</label>
    </ligand>
</feature>
<feature type="binding site" evidence="2">
    <location>
        <position position="183"/>
    </location>
    <ligand>
        <name>Ca(2+)</name>
        <dbReference type="ChEBI" id="CHEBI:29108"/>
        <label>1</label>
    </ligand>
</feature>
<feature type="binding site" evidence="2">
    <location>
        <position position="203"/>
    </location>
    <ligand>
        <name>Ca(2+)</name>
        <dbReference type="ChEBI" id="CHEBI:29108"/>
        <label>2</label>
    </ligand>
</feature>
<feature type="binding site" evidence="2">
    <location>
        <position position="205"/>
    </location>
    <ligand>
        <name>Ca(2+)</name>
        <dbReference type="ChEBI" id="CHEBI:29108"/>
        <label>2</label>
    </ligand>
</feature>
<feature type="binding site" evidence="2">
    <location>
        <position position="211"/>
    </location>
    <ligand>
        <name>Ca(2+)</name>
        <dbReference type="ChEBI" id="CHEBI:29108"/>
        <label>1</label>
    </ligand>
</feature>
<feature type="binding site" evidence="2">
    <location>
        <position position="211"/>
    </location>
    <ligand>
        <name>Ca(2+)</name>
        <dbReference type="ChEBI" id="CHEBI:29108"/>
        <label>2</label>
    </ligand>
</feature>
<feature type="binding site" evidence="2">
    <location>
        <position position="212"/>
    </location>
    <ligand>
        <name>Ca(2+)</name>
        <dbReference type="ChEBI" id="CHEBI:29108"/>
        <label>1</label>
    </ligand>
</feature>
<feature type="binding site" evidence="2">
    <location>
        <position position="223"/>
    </location>
    <ligand>
        <name>Ca(2+)</name>
        <dbReference type="ChEBI" id="CHEBI:29108"/>
        <label>2</label>
    </ligand>
</feature>
<feature type="binding site" evidence="2">
    <location>
        <position position="224"/>
    </location>
    <ligand>
        <name>Ca(2+)</name>
        <dbReference type="ChEBI" id="CHEBI:29108"/>
        <label>2</label>
    </ligand>
</feature>
<feature type="modified residue" description="4-hydroxyproline" evidence="3">
    <location>
        <position position="44"/>
    </location>
</feature>
<feature type="modified residue" description="5-hydroxylysine" evidence="2">
    <location>
        <position position="45"/>
    </location>
</feature>
<feature type="modified residue" description="5-hydroxylysine" evidence="2">
    <location>
        <position position="48"/>
    </location>
</feature>
<feature type="modified residue" description="4-hydroxyproline" evidence="2">
    <location>
        <position position="51"/>
    </location>
</feature>
<feature type="modified residue" description="4-hydroxyproline" evidence="1">
    <location>
        <position position="62"/>
    </location>
</feature>
<feature type="modified residue" description="4-hydroxyproline" evidence="1">
    <location>
        <position position="68"/>
    </location>
</feature>
<feature type="modified residue" description="4-hydroxyproline" evidence="1">
    <location>
        <position position="74"/>
    </location>
</feature>
<feature type="modified residue" description="4-hydroxyproline" evidence="3">
    <location>
        <position position="79"/>
    </location>
</feature>
<feature type="modified residue" description="5-hydroxylysine" evidence="2">
    <location>
        <position position="80"/>
    </location>
</feature>
<feature type="modified residue" description="5-hydroxylysine" evidence="2">
    <location>
        <position position="83"/>
    </location>
</feature>
<feature type="glycosylation site" description="O-linked (Gal...) hydroxylysine" evidence="2">
    <location>
        <position position="45"/>
    </location>
</feature>
<feature type="glycosylation site" description="O-linked (Gal...) hydroxylysine" evidence="2">
    <location>
        <position position="48"/>
    </location>
</feature>
<feature type="glycosylation site" description="O-linked (Gal...) hydroxylysine" evidence="2">
    <location>
        <position position="80"/>
    </location>
</feature>
<feature type="glycosylation site" description="O-linked (Gal...) hydroxylysine" evidence="2">
    <location>
        <position position="83"/>
    </location>
</feature>
<feature type="disulfide bond" evidence="4">
    <location>
        <begin position="146"/>
        <end position="235"/>
    </location>
</feature>
<feature type="disulfide bond" evidence="4">
    <location>
        <begin position="213"/>
        <end position="227"/>
    </location>
</feature>
<feature type="splice variant" id="VSP_038477" description="In isoform 2." evidence="9">
    <location>
        <begin position="1"/>
        <end position="98"/>
    </location>
</feature>
<dbReference type="EMBL" id="S42292">
    <property type="protein sequence ID" value="AAB19342.1"/>
    <property type="molecule type" value="mRNA"/>
</dbReference>
<dbReference type="EMBL" id="D11441">
    <property type="protein sequence ID" value="BAA02006.1"/>
    <property type="molecule type" value="mRNA"/>
</dbReference>
<dbReference type="EMBL" id="U09010">
    <property type="protein sequence ID" value="AAA82009.1"/>
    <property type="molecule type" value="Genomic_DNA"/>
</dbReference>
<dbReference type="EMBL" id="U09007">
    <property type="protein sequence ID" value="AAA82009.1"/>
    <property type="status" value="JOINED"/>
    <property type="molecule type" value="Genomic_DNA"/>
</dbReference>
<dbReference type="EMBL" id="U09008">
    <property type="protein sequence ID" value="AAA82009.1"/>
    <property type="status" value="JOINED"/>
    <property type="molecule type" value="Genomic_DNA"/>
</dbReference>
<dbReference type="EMBL" id="U09009">
    <property type="protein sequence ID" value="AAA82009.1"/>
    <property type="status" value="JOINED"/>
    <property type="molecule type" value="Genomic_DNA"/>
</dbReference>
<dbReference type="EMBL" id="BC012245">
    <property type="protein sequence ID" value="AAH12245.1"/>
    <property type="molecule type" value="mRNA"/>
</dbReference>
<dbReference type="EMBL" id="BC021762">
    <property type="protein sequence ID" value="AAH21762.1"/>
    <property type="molecule type" value="mRNA"/>
</dbReference>
<dbReference type="CCDS" id="CCDS26961.1">
    <molecule id="P39039-1"/>
</dbReference>
<dbReference type="PIR" id="A46466">
    <property type="entry name" value="LNMSMA"/>
</dbReference>
<dbReference type="RefSeq" id="NP_034905.1">
    <molecule id="P39039-1"/>
    <property type="nucleotide sequence ID" value="NM_010775.2"/>
</dbReference>
<dbReference type="RefSeq" id="XP_006518732.1">
    <molecule id="P39039-1"/>
    <property type="nucleotide sequence ID" value="XM_006518669.4"/>
</dbReference>
<dbReference type="RefSeq" id="XP_017171395.1">
    <property type="nucleotide sequence ID" value="XM_017315906.1"/>
</dbReference>
<dbReference type="SMR" id="P39039"/>
<dbReference type="FunCoup" id="P39039">
    <property type="interactions" value="202"/>
</dbReference>
<dbReference type="STRING" id="10090.ENSMUSP00000153147"/>
<dbReference type="GlyCosmos" id="P39039">
    <property type="glycosylation" value="4 sites, No reported glycans"/>
</dbReference>
<dbReference type="GlyGen" id="P39039">
    <property type="glycosylation" value="4 sites"/>
</dbReference>
<dbReference type="iPTMnet" id="P39039"/>
<dbReference type="PhosphoSitePlus" id="P39039"/>
<dbReference type="CPTAC" id="non-CPTAC-3725"/>
<dbReference type="jPOST" id="P39039"/>
<dbReference type="PaxDb" id="10090-ENSMUSP00000048765"/>
<dbReference type="PeptideAtlas" id="P39039"/>
<dbReference type="ProteomicsDB" id="295803">
    <molecule id="P39039-1"/>
</dbReference>
<dbReference type="ProteomicsDB" id="295804">
    <molecule id="P39039-2"/>
</dbReference>
<dbReference type="DNASU" id="17194"/>
<dbReference type="Ensembl" id="ENSMUST00000225792.2">
    <molecule id="P39039-1"/>
    <property type="protein sequence ID" value="ENSMUSP00000153147.2"/>
    <property type="gene ID" value="ENSMUSG00000037780.4"/>
</dbReference>
<dbReference type="GeneID" id="17194"/>
<dbReference type="KEGG" id="mmu:17194"/>
<dbReference type="UCSC" id="uc007tcp.1">
    <molecule id="P39039-1"/>
    <property type="organism name" value="mouse"/>
</dbReference>
<dbReference type="AGR" id="MGI:96923"/>
<dbReference type="CTD" id="17194"/>
<dbReference type="MGI" id="MGI:96923">
    <property type="gene designation" value="Mbl1"/>
</dbReference>
<dbReference type="VEuPathDB" id="HostDB:ENSMUSG00000037780"/>
<dbReference type="eggNOG" id="KOG4297">
    <property type="taxonomic scope" value="Eukaryota"/>
</dbReference>
<dbReference type="GeneTree" id="ENSGT00940000154368"/>
<dbReference type="HOGENOM" id="CLU_049894_3_0_1"/>
<dbReference type="InParanoid" id="P39039"/>
<dbReference type="OMA" id="ACSVITC"/>
<dbReference type="OrthoDB" id="10255512at2759"/>
<dbReference type="PhylomeDB" id="P39039"/>
<dbReference type="TreeFam" id="TF330481"/>
<dbReference type="BioGRID-ORCS" id="17194">
    <property type="hits" value="2 hits in 76 CRISPR screens"/>
</dbReference>
<dbReference type="PRO" id="PR:P39039"/>
<dbReference type="Proteomes" id="UP000000589">
    <property type="component" value="Chromosome 14"/>
</dbReference>
<dbReference type="RNAct" id="P39039">
    <property type="molecule type" value="protein"/>
</dbReference>
<dbReference type="Bgee" id="ENSMUSG00000037780">
    <property type="expression patterns" value="Expressed in left lobe of liver and 20 other cell types or tissues"/>
</dbReference>
<dbReference type="ExpressionAtlas" id="P39039">
    <property type="expression patterns" value="baseline and differential"/>
</dbReference>
<dbReference type="GO" id="GO:0005581">
    <property type="term" value="C:collagen trimer"/>
    <property type="evidence" value="ECO:0007669"/>
    <property type="project" value="UniProtKB-KW"/>
</dbReference>
<dbReference type="GO" id="GO:0005615">
    <property type="term" value="C:extracellular space"/>
    <property type="evidence" value="ECO:0000314"/>
    <property type="project" value="MGI"/>
</dbReference>
<dbReference type="GO" id="GO:0005509">
    <property type="term" value="F:calcium ion binding"/>
    <property type="evidence" value="ECO:0000250"/>
    <property type="project" value="UniProtKB"/>
</dbReference>
<dbReference type="GO" id="GO:0120153">
    <property type="term" value="F:calcium-dependent carbohydrate binding"/>
    <property type="evidence" value="ECO:0000250"/>
    <property type="project" value="UniProtKB"/>
</dbReference>
<dbReference type="GO" id="GO:0005537">
    <property type="term" value="F:D-mannose binding"/>
    <property type="evidence" value="ECO:0000250"/>
    <property type="project" value="UniProtKB"/>
</dbReference>
<dbReference type="GO" id="GO:0070492">
    <property type="term" value="F:oligosaccharide binding"/>
    <property type="evidence" value="ECO:0000250"/>
    <property type="project" value="UniProtKB"/>
</dbReference>
<dbReference type="GO" id="GO:0006958">
    <property type="term" value="P:complement activation, classical pathway"/>
    <property type="evidence" value="ECO:0007669"/>
    <property type="project" value="UniProtKB-KW"/>
</dbReference>
<dbReference type="GO" id="GO:0001867">
    <property type="term" value="P:complement activation, lectin pathway"/>
    <property type="evidence" value="ECO:0000314"/>
    <property type="project" value="MGI"/>
</dbReference>
<dbReference type="GO" id="GO:0050830">
    <property type="term" value="P:defense response to Gram-positive bacterium"/>
    <property type="evidence" value="ECO:0000316"/>
    <property type="project" value="MGI"/>
</dbReference>
<dbReference type="GO" id="GO:0051873">
    <property type="term" value="P:killing by host of symbiont cells"/>
    <property type="evidence" value="ECO:0000316"/>
    <property type="project" value="MGI"/>
</dbReference>
<dbReference type="GO" id="GO:0050766">
    <property type="term" value="P:positive regulation of phagocytosis"/>
    <property type="evidence" value="ECO:0000316"/>
    <property type="project" value="MGI"/>
</dbReference>
<dbReference type="GO" id="GO:0070207">
    <property type="term" value="P:protein homotrimerization"/>
    <property type="evidence" value="ECO:0000250"/>
    <property type="project" value="UniProtKB"/>
</dbReference>
<dbReference type="CDD" id="cd03591">
    <property type="entry name" value="CLECT_collectin_like"/>
    <property type="match status" value="1"/>
</dbReference>
<dbReference type="FunFam" id="3.10.100.10:FF:000088">
    <property type="entry name" value="Mannose-binding protein A"/>
    <property type="match status" value="1"/>
</dbReference>
<dbReference type="Gene3D" id="3.10.100.10">
    <property type="entry name" value="Mannose-Binding Protein A, subunit A"/>
    <property type="match status" value="1"/>
</dbReference>
<dbReference type="InterPro" id="IPR001304">
    <property type="entry name" value="C-type_lectin-like"/>
</dbReference>
<dbReference type="InterPro" id="IPR016186">
    <property type="entry name" value="C-type_lectin-like/link_sf"/>
</dbReference>
<dbReference type="InterPro" id="IPR018378">
    <property type="entry name" value="C-type_lectin_CS"/>
</dbReference>
<dbReference type="InterPro" id="IPR051077">
    <property type="entry name" value="Ca-dependent_lectin"/>
</dbReference>
<dbReference type="InterPro" id="IPR008160">
    <property type="entry name" value="Collagen"/>
</dbReference>
<dbReference type="InterPro" id="IPR033990">
    <property type="entry name" value="Collectin_CTLD"/>
</dbReference>
<dbReference type="InterPro" id="IPR016187">
    <property type="entry name" value="CTDL_fold"/>
</dbReference>
<dbReference type="PANTHER" id="PTHR24024:SF35">
    <property type="entry name" value="MANNOSE-BINDING PROTEIN A"/>
    <property type="match status" value="1"/>
</dbReference>
<dbReference type="PANTHER" id="PTHR24024">
    <property type="entry name" value="PULMONARY SURFACTANT-ASSOCIATED PROTEIN A"/>
    <property type="match status" value="1"/>
</dbReference>
<dbReference type="Pfam" id="PF01391">
    <property type="entry name" value="Collagen"/>
    <property type="match status" value="1"/>
</dbReference>
<dbReference type="Pfam" id="PF00059">
    <property type="entry name" value="Lectin_C"/>
    <property type="match status" value="1"/>
</dbReference>
<dbReference type="SMART" id="SM00034">
    <property type="entry name" value="CLECT"/>
    <property type="match status" value="1"/>
</dbReference>
<dbReference type="SUPFAM" id="SSF56436">
    <property type="entry name" value="C-type lectin-like"/>
    <property type="match status" value="1"/>
</dbReference>
<dbReference type="SUPFAM" id="SSF57944">
    <property type="entry name" value="Triple coiled coil domain of C-type lectins"/>
    <property type="match status" value="1"/>
</dbReference>
<dbReference type="PROSITE" id="PS00615">
    <property type="entry name" value="C_TYPE_LECTIN_1"/>
    <property type="match status" value="1"/>
</dbReference>
<dbReference type="PROSITE" id="PS50041">
    <property type="entry name" value="C_TYPE_LECTIN_2"/>
    <property type="match status" value="1"/>
</dbReference>
<keyword id="KW-0025">Alternative splicing</keyword>
<keyword id="KW-0106">Calcium</keyword>
<keyword id="KW-0176">Collagen</keyword>
<keyword id="KW-1018">Complement activation lectin pathway</keyword>
<keyword id="KW-0180">Complement pathway</keyword>
<keyword id="KW-0903">Direct protein sequencing</keyword>
<keyword id="KW-1015">Disulfide bond</keyword>
<keyword id="KW-0325">Glycoprotein</keyword>
<keyword id="KW-0379">Hydroxylation</keyword>
<keyword id="KW-0391">Immunity</keyword>
<keyword id="KW-0399">Innate immunity</keyword>
<keyword id="KW-0430">Lectin</keyword>
<keyword id="KW-0465">Mannose-binding</keyword>
<keyword id="KW-0479">Metal-binding</keyword>
<keyword id="KW-1185">Reference proteome</keyword>
<keyword id="KW-0677">Repeat</keyword>
<keyword id="KW-0964">Secreted</keyword>
<keyword id="KW-0732">Signal</keyword>